<reference key="1">
    <citation type="journal article" date="2005" name="J. Virol.">
        <title>The common viral insertion site Evi12 is located in the 5'-noncoding region of Gnn, a novel gene with enhanced expression in two subclasses of human acute myeloid leukemia.</title>
        <authorList>
            <person name="van den Akker E."/>
            <person name="Vankan-Berkhoudt Y."/>
            <person name="Valk P.J.M."/>
            <person name="Loewenberg B."/>
            <person name="Delwel R."/>
        </authorList>
    </citation>
    <scope>NUCLEOTIDE SEQUENCE [MRNA] (ISOFORMS 1; 2 AND 4)</scope>
    <scope>SUBCELLULAR LOCATION</scope>
    <scope>TISSUE SPECIFICITY</scope>
    <source>
        <strain>NIH Swiss</strain>
    </source>
</reference>
<reference key="2">
    <citation type="journal article" date="2005" name="Science">
        <title>The transcriptional landscape of the mammalian genome.</title>
        <authorList>
            <person name="Carninci P."/>
            <person name="Kasukawa T."/>
            <person name="Katayama S."/>
            <person name="Gough J."/>
            <person name="Frith M.C."/>
            <person name="Maeda N."/>
            <person name="Oyama R."/>
            <person name="Ravasi T."/>
            <person name="Lenhard B."/>
            <person name="Wells C."/>
            <person name="Kodzius R."/>
            <person name="Shimokawa K."/>
            <person name="Bajic V.B."/>
            <person name="Brenner S.E."/>
            <person name="Batalov S."/>
            <person name="Forrest A.R."/>
            <person name="Zavolan M."/>
            <person name="Davis M.J."/>
            <person name="Wilming L.G."/>
            <person name="Aidinis V."/>
            <person name="Allen J.E."/>
            <person name="Ambesi-Impiombato A."/>
            <person name="Apweiler R."/>
            <person name="Aturaliya R.N."/>
            <person name="Bailey T.L."/>
            <person name="Bansal M."/>
            <person name="Baxter L."/>
            <person name="Beisel K.W."/>
            <person name="Bersano T."/>
            <person name="Bono H."/>
            <person name="Chalk A.M."/>
            <person name="Chiu K.P."/>
            <person name="Choudhary V."/>
            <person name="Christoffels A."/>
            <person name="Clutterbuck D.R."/>
            <person name="Crowe M.L."/>
            <person name="Dalla E."/>
            <person name="Dalrymple B.P."/>
            <person name="de Bono B."/>
            <person name="Della Gatta G."/>
            <person name="di Bernardo D."/>
            <person name="Down T."/>
            <person name="Engstrom P."/>
            <person name="Fagiolini M."/>
            <person name="Faulkner G."/>
            <person name="Fletcher C.F."/>
            <person name="Fukushima T."/>
            <person name="Furuno M."/>
            <person name="Futaki S."/>
            <person name="Gariboldi M."/>
            <person name="Georgii-Hemming P."/>
            <person name="Gingeras T.R."/>
            <person name="Gojobori T."/>
            <person name="Green R.E."/>
            <person name="Gustincich S."/>
            <person name="Harbers M."/>
            <person name="Hayashi Y."/>
            <person name="Hensch T.K."/>
            <person name="Hirokawa N."/>
            <person name="Hill D."/>
            <person name="Huminiecki L."/>
            <person name="Iacono M."/>
            <person name="Ikeo K."/>
            <person name="Iwama A."/>
            <person name="Ishikawa T."/>
            <person name="Jakt M."/>
            <person name="Kanapin A."/>
            <person name="Katoh M."/>
            <person name="Kawasawa Y."/>
            <person name="Kelso J."/>
            <person name="Kitamura H."/>
            <person name="Kitano H."/>
            <person name="Kollias G."/>
            <person name="Krishnan S.P."/>
            <person name="Kruger A."/>
            <person name="Kummerfeld S.K."/>
            <person name="Kurochkin I.V."/>
            <person name="Lareau L.F."/>
            <person name="Lazarevic D."/>
            <person name="Lipovich L."/>
            <person name="Liu J."/>
            <person name="Liuni S."/>
            <person name="McWilliam S."/>
            <person name="Madan Babu M."/>
            <person name="Madera M."/>
            <person name="Marchionni L."/>
            <person name="Matsuda H."/>
            <person name="Matsuzawa S."/>
            <person name="Miki H."/>
            <person name="Mignone F."/>
            <person name="Miyake S."/>
            <person name="Morris K."/>
            <person name="Mottagui-Tabar S."/>
            <person name="Mulder N."/>
            <person name="Nakano N."/>
            <person name="Nakauchi H."/>
            <person name="Ng P."/>
            <person name="Nilsson R."/>
            <person name="Nishiguchi S."/>
            <person name="Nishikawa S."/>
            <person name="Nori F."/>
            <person name="Ohara O."/>
            <person name="Okazaki Y."/>
            <person name="Orlando V."/>
            <person name="Pang K.C."/>
            <person name="Pavan W.J."/>
            <person name="Pavesi G."/>
            <person name="Pesole G."/>
            <person name="Petrovsky N."/>
            <person name="Piazza S."/>
            <person name="Reed J."/>
            <person name="Reid J.F."/>
            <person name="Ring B.Z."/>
            <person name="Ringwald M."/>
            <person name="Rost B."/>
            <person name="Ruan Y."/>
            <person name="Salzberg S.L."/>
            <person name="Sandelin A."/>
            <person name="Schneider C."/>
            <person name="Schoenbach C."/>
            <person name="Sekiguchi K."/>
            <person name="Semple C.A."/>
            <person name="Seno S."/>
            <person name="Sessa L."/>
            <person name="Sheng Y."/>
            <person name="Shibata Y."/>
            <person name="Shimada H."/>
            <person name="Shimada K."/>
            <person name="Silva D."/>
            <person name="Sinclair B."/>
            <person name="Sperling S."/>
            <person name="Stupka E."/>
            <person name="Sugiura K."/>
            <person name="Sultana R."/>
            <person name="Takenaka Y."/>
            <person name="Taki K."/>
            <person name="Tammoja K."/>
            <person name="Tan S.L."/>
            <person name="Tang S."/>
            <person name="Taylor M.S."/>
            <person name="Tegner J."/>
            <person name="Teichmann S.A."/>
            <person name="Ueda H.R."/>
            <person name="van Nimwegen E."/>
            <person name="Verardo R."/>
            <person name="Wei C.L."/>
            <person name="Yagi K."/>
            <person name="Yamanishi H."/>
            <person name="Zabarovsky E."/>
            <person name="Zhu S."/>
            <person name="Zimmer A."/>
            <person name="Hide W."/>
            <person name="Bult C."/>
            <person name="Grimmond S.M."/>
            <person name="Teasdale R.D."/>
            <person name="Liu E.T."/>
            <person name="Brusic V."/>
            <person name="Quackenbush J."/>
            <person name="Wahlestedt C."/>
            <person name="Mattick J.S."/>
            <person name="Hume D.A."/>
            <person name="Kai C."/>
            <person name="Sasaki D."/>
            <person name="Tomaru Y."/>
            <person name="Fukuda S."/>
            <person name="Kanamori-Katayama M."/>
            <person name="Suzuki M."/>
            <person name="Aoki J."/>
            <person name="Arakawa T."/>
            <person name="Iida J."/>
            <person name="Imamura K."/>
            <person name="Itoh M."/>
            <person name="Kato T."/>
            <person name="Kawaji H."/>
            <person name="Kawagashira N."/>
            <person name="Kawashima T."/>
            <person name="Kojima M."/>
            <person name="Kondo S."/>
            <person name="Konno H."/>
            <person name="Nakano K."/>
            <person name="Ninomiya N."/>
            <person name="Nishio T."/>
            <person name="Okada M."/>
            <person name="Plessy C."/>
            <person name="Shibata K."/>
            <person name="Shiraki T."/>
            <person name="Suzuki S."/>
            <person name="Tagami M."/>
            <person name="Waki K."/>
            <person name="Watahiki A."/>
            <person name="Okamura-Oho Y."/>
            <person name="Suzuki H."/>
            <person name="Kawai J."/>
            <person name="Hayashizaki Y."/>
        </authorList>
    </citation>
    <scope>NUCLEOTIDE SEQUENCE [LARGE SCALE MRNA] OF 1-1297 (ISOFORM 3)</scope>
    <source>
        <strain>C57BL/6J</strain>
    </source>
</reference>
<reference key="3">
    <citation type="journal article" date="2004" name="Genome Res.">
        <title>The status, quality, and expansion of the NIH full-length cDNA project: the Mammalian Gene Collection (MGC).</title>
        <authorList>
            <consortium name="The MGC Project Team"/>
        </authorList>
    </citation>
    <scope>NUCLEOTIDE SEQUENCE [LARGE SCALE MRNA] (ISOFORM 4)</scope>
    <source>
        <tissue>Eye</tissue>
    </source>
</reference>
<gene>
    <name evidence="7" type="primary">Ttc41</name>
    <name evidence="7" type="synonym">GNN</name>
</gene>
<name>TTC41_MOUSE</name>
<sequence>MSDEASETGQRYNGQPILKRQKPILPYICSTLDFQEERDFLAKSIFPRLNDICSSRGTYFKAVDLRWSAVKAHKSFTSNQFRQYSCLQSQHLKLSLDYVNRCFPFFIGLLGQTYGDFLPDYTPFLLSQVKDFESLSKGKKNLYIAAKNGYPWVLKTPNCSLTEFEIIQAVFRKKSQFQFFYFRTSNSLLRTFNEEEEEEEEKLSSAYLLNEQGKMKVGKLKAKIIGKGLPVRFYRDLEELGDMVWKDWSAVVEKLYPFTTIMGNIDYKHSFENLYHEEFVENCKQVFVTSKESNRTFEILERFAIKDLDLDLDTDSTIAGSGLDSILRINSLPTCKSILLLSGERGCGKSTLIANWVSNFQSKHPGVLMIPYFVGSTCESCDIMSVIHYFVMELQHRANGPRLEMDFLNEDSNVLVFSLLVEVFIAAISLKPCILVLDGIEELIGIYGISGQKAKDFSWLPRSLPPHCKFILSSVSSSLSCKSLCARPDVKIVELNSIGDEDTKFNIFRQHLSPADQERFGQSKPILRKKPNLSPLKLAIIASELQECKIYRNEFQCLREYLEVASVQELWELILKRWVEDYSWTLKPKDTTLDTVIPGPSGWVVDVLCLLCISHCGLAEDELLQLLDTMGYRDHHKVTAVHWAAFRQATKTWIQEKPNGLLYFQHQSLRSAVEHKLLGVSTPVRESNPNVAQNSVNHKKAHFHQVLMRFFQRQTIFWRVYQELPWHMKMSGYWEGLCNFITNPSITDFISKIQNPSLWTRLHLVHYWDVLLEAGNDVSEAFLLSVAKIEGEQFQKLKKRTTLSVLECSLSEITAADKGRIILFIGSFLKLMGKINEAEKLFLSAEDLLLQSPSMTEMLLRAQNAIGELYLEIGMTPKGLTYFQKAWSNLLRFTLSDLKISQELMKQKVKVMNNLAESAPGEFLKENHVLEYATEISKYVTGNPRDHATMKYTEGVLMLASGNAALAKLKFQECLTIRRWLFGNKNILVGEIMEFLADLLFFLLGENEKSQKKQAIEYYKQVIKIKEKADTVATCKLVRKHLSISLSDTLCKLAGQLLSGDFCHHATMEAVSYLYRSLDLRAAHLGPTHASIEGILHLLREIQRSRGRRSWPQSMNHLFPNGSRNGFSLWENVPKLNFHSAQSSDTVNTAMCMNIRRFQRVKSTQPSLVSDKPKYVPGKGKKTLAPILCKSAEEKFQRQASDSQIWNSPRRQPARKKAACPLKTVSLIDKNGLVRLSRQSVSSAELDSRKGLITSICRQPLQRPHNVDNPWKSISELVSEKWLFHTPQYCFTPQKPGFPRRSQIESKLLKTSDDPNKE</sequence>
<dbReference type="EMBL" id="AY651019">
    <property type="protein sequence ID" value="AAT81231.1"/>
    <property type="molecule type" value="mRNA"/>
</dbReference>
<dbReference type="EMBL" id="AY651020">
    <property type="protein sequence ID" value="AAT81232.1"/>
    <property type="molecule type" value="mRNA"/>
</dbReference>
<dbReference type="EMBL" id="AY651021">
    <property type="protein sequence ID" value="AAT81233.1"/>
    <property type="molecule type" value="mRNA"/>
</dbReference>
<dbReference type="EMBL" id="AK166553">
    <property type="protein sequence ID" value="BAE38851.1"/>
    <property type="molecule type" value="mRNA"/>
</dbReference>
<dbReference type="EMBL" id="BC030307">
    <property type="protein sequence ID" value="AAH30307.1"/>
    <property type="molecule type" value="mRNA"/>
</dbReference>
<dbReference type="CCDS" id="CCDS24098.1">
    <molecule id="Q692V3-1"/>
</dbReference>
<dbReference type="CCDS" id="CCDS24099.1">
    <molecule id="Q692V3-4"/>
</dbReference>
<dbReference type="CCDS" id="CCDS88066.1">
    <molecule id="Q692V3-2"/>
</dbReference>
<dbReference type="RefSeq" id="NP_001003910.2">
    <property type="nucleotide sequence ID" value="NM_001003910.2"/>
</dbReference>
<dbReference type="RefSeq" id="NP_001003939.2">
    <property type="nucleotide sequence ID" value="NM_001003939.2"/>
</dbReference>
<dbReference type="SMR" id="Q692V3"/>
<dbReference type="STRING" id="10090.ENSMUSP00000075059"/>
<dbReference type="iPTMnet" id="Q692V3"/>
<dbReference type="PhosphoSitePlus" id="Q692V3"/>
<dbReference type="PaxDb" id="10090-ENSMUSP00000075059"/>
<dbReference type="ProteomicsDB" id="298331">
    <molecule id="Q692V3-1"/>
</dbReference>
<dbReference type="ProteomicsDB" id="298332">
    <molecule id="Q692V3-2"/>
</dbReference>
<dbReference type="ProteomicsDB" id="298333">
    <molecule id="Q692V3-3"/>
</dbReference>
<dbReference type="ProteomicsDB" id="298334">
    <molecule id="Q692V3-4"/>
</dbReference>
<dbReference type="DNASU" id="103220"/>
<dbReference type="GeneID" id="103220"/>
<dbReference type="KEGG" id="mmu:103220"/>
<dbReference type="UCSC" id="uc007gqj.1">
    <molecule id="Q692V3-4"/>
    <property type="organism name" value="mouse"/>
</dbReference>
<dbReference type="UCSC" id="uc007gql.1">
    <molecule id="Q692V3-2"/>
    <property type="organism name" value="mouse"/>
</dbReference>
<dbReference type="UCSC" id="uc011xkv.1">
    <molecule id="Q692V3-3"/>
    <property type="organism name" value="mouse"/>
</dbReference>
<dbReference type="AGR" id="MGI:2387653"/>
<dbReference type="CTD" id="103220"/>
<dbReference type="MGI" id="MGI:2387653">
    <property type="gene designation" value="Ttc41"/>
</dbReference>
<dbReference type="eggNOG" id="ENOG502QUVD">
    <property type="taxonomic scope" value="Eukaryota"/>
</dbReference>
<dbReference type="InParanoid" id="Q692V3"/>
<dbReference type="OrthoDB" id="2325716at2759"/>
<dbReference type="PhylomeDB" id="Q692V3"/>
<dbReference type="BioGRID-ORCS" id="103220">
    <property type="hits" value="5 hits in 77 CRISPR screens"/>
</dbReference>
<dbReference type="ChiTaRS" id="Ttc41">
    <property type="organism name" value="mouse"/>
</dbReference>
<dbReference type="PRO" id="PR:Q692V3"/>
<dbReference type="Proteomes" id="UP000000589">
    <property type="component" value="Unplaced"/>
</dbReference>
<dbReference type="RNAct" id="Q692V3">
    <property type="molecule type" value="protein"/>
</dbReference>
<dbReference type="GO" id="GO:0005737">
    <property type="term" value="C:cytoplasm"/>
    <property type="evidence" value="ECO:0007669"/>
    <property type="project" value="UniProtKB-SubCell"/>
</dbReference>
<dbReference type="Gene3D" id="3.40.50.300">
    <property type="entry name" value="P-loop containing nucleotide triphosphate hydrolases"/>
    <property type="match status" value="1"/>
</dbReference>
<dbReference type="Gene3D" id="1.25.40.10">
    <property type="entry name" value="Tetratricopeptide repeat domain"/>
    <property type="match status" value="1"/>
</dbReference>
<dbReference type="InterPro" id="IPR051191">
    <property type="entry name" value="DCAF12"/>
</dbReference>
<dbReference type="InterPro" id="IPR007111">
    <property type="entry name" value="NACHT_NTPase"/>
</dbReference>
<dbReference type="InterPro" id="IPR027417">
    <property type="entry name" value="P-loop_NTPase"/>
</dbReference>
<dbReference type="InterPro" id="IPR011990">
    <property type="entry name" value="TPR-like_helical_dom_sf"/>
</dbReference>
<dbReference type="PANTHER" id="PTHR19860">
    <property type="entry name" value="DDB1- AND CUL4-ASSOCIATED FACTOR 12-RELATED"/>
    <property type="match status" value="1"/>
</dbReference>
<dbReference type="PANTHER" id="PTHR19860:SF18">
    <property type="entry name" value="DUF4062 DOMAIN-CONTAINING PROTEIN"/>
    <property type="match status" value="1"/>
</dbReference>
<dbReference type="Pfam" id="PF05729">
    <property type="entry name" value="NACHT"/>
    <property type="match status" value="1"/>
</dbReference>
<dbReference type="SUPFAM" id="SSF52540">
    <property type="entry name" value="P-loop containing nucleoside triphosphate hydrolases"/>
    <property type="match status" value="1"/>
</dbReference>
<feature type="chain" id="PRO_0000342550" description="Tetratricopeptide repeat protein 41">
    <location>
        <begin position="1"/>
        <end position="1318"/>
    </location>
</feature>
<feature type="repeat" description="TPR 1">
    <location>
        <begin position="401"/>
        <end position="434"/>
    </location>
</feature>
<feature type="repeat" description="TPR 2">
    <location>
        <begin position="653"/>
        <end position="686"/>
    </location>
</feature>
<feature type="repeat" description="TPR 3">
    <location>
        <begin position="819"/>
        <end position="852"/>
    </location>
</feature>
<feature type="repeat" description="TPR 4">
    <location>
        <begin position="860"/>
        <end position="893"/>
    </location>
</feature>
<feature type="repeat" description="TPR 5">
    <location>
        <begin position="993"/>
        <end position="1029"/>
    </location>
</feature>
<feature type="repeat" description="TPR 6">
    <location>
        <begin position="1047"/>
        <end position="1084"/>
    </location>
</feature>
<feature type="region of interest" description="Disordered" evidence="1">
    <location>
        <begin position="1295"/>
        <end position="1318"/>
    </location>
</feature>
<feature type="compositionally biased region" description="Basic and acidic residues" evidence="1">
    <location>
        <begin position="1302"/>
        <end position="1318"/>
    </location>
</feature>
<feature type="splice variant" id="VSP_034497" description="In isoform 3." evidence="5">
    <location>
        <begin position="1"/>
        <end position="831"/>
    </location>
</feature>
<feature type="splice variant" id="VSP_034498" description="In isoform 4." evidence="3 4">
    <original>PRLEMDFLN</original>
    <variation>NRASLMGRK</variation>
    <location>
        <begin position="401"/>
        <end position="409"/>
    </location>
</feature>
<feature type="splice variant" id="VSP_034499" description="In isoform 4." evidence="3 4">
    <location>
        <begin position="410"/>
        <end position="1318"/>
    </location>
</feature>
<feature type="splice variant" id="VSP_034500" description="In isoform 2." evidence="4">
    <original>P</original>
    <variation>V</variation>
    <location>
        <position position="600"/>
    </location>
</feature>
<feature type="splice variant" id="VSP_034501" description="In isoform 2." evidence="4">
    <location>
        <begin position="601"/>
        <end position="1318"/>
    </location>
</feature>
<feature type="sequence conflict" description="In Ref. 3; AAH30307." evidence="6" ref="3">
    <original>KK</original>
    <variation>EQ</variation>
    <location>
        <begin position="139"/>
        <end position="140"/>
    </location>
</feature>
<feature type="sequence conflict" description="In Ref. 1; AAT81232." evidence="6" ref="1">
    <original>N</original>
    <variation>D</variation>
    <location>
        <position position="355"/>
    </location>
</feature>
<feature type="sequence conflict" description="In Ref. 2; BAE38851." evidence="6" ref="2">
    <original>E</original>
    <variation>K</variation>
    <location>
        <position position="917"/>
    </location>
</feature>
<feature type="sequence conflict" description="In Ref. 2; BAE38851." evidence="6" ref="2">
    <original>R</original>
    <variation>L</variation>
    <location>
        <position position="1263"/>
    </location>
</feature>
<evidence type="ECO:0000256" key="1">
    <source>
        <dbReference type="SAM" id="MobiDB-lite"/>
    </source>
</evidence>
<evidence type="ECO:0000269" key="2">
    <source>
    </source>
</evidence>
<evidence type="ECO:0000303" key="3">
    <source>
    </source>
</evidence>
<evidence type="ECO:0000303" key="4">
    <source>
    </source>
</evidence>
<evidence type="ECO:0000303" key="5">
    <source>
    </source>
</evidence>
<evidence type="ECO:0000305" key="6"/>
<evidence type="ECO:0000312" key="7">
    <source>
        <dbReference type="MGI" id="MGI:2387653"/>
    </source>
</evidence>
<comment type="subcellular location">
    <subcellularLocation>
        <location evidence="2">Cytoplasm</location>
    </subcellularLocation>
</comment>
<comment type="subcellular location">
    <molecule>Isoform 2</molecule>
    <subcellularLocation>
        <location>Cytoplasm</location>
    </subcellularLocation>
</comment>
<comment type="subcellular location">
    <molecule>Isoform 4</molecule>
    <subcellularLocation>
        <location>Cytoplasm</location>
    </subcellularLocation>
</comment>
<comment type="alternative products">
    <event type="alternative splicing"/>
    <isoform>
        <id>Q692V3-1</id>
        <name>1</name>
        <name>Gnn3</name>
        <sequence type="displayed"/>
    </isoform>
    <isoform>
        <id>Q692V3-2</id>
        <name>2</name>
        <name>Gnn2</name>
        <sequence type="described" ref="VSP_034500 VSP_034501"/>
    </isoform>
    <isoform>
        <id>Q692V3-3</id>
        <name>3</name>
        <sequence type="described" ref="VSP_034497"/>
    </isoform>
    <isoform>
        <id>Q692V3-4</id>
        <name>4</name>
        <name>Gnn1</name>
        <sequence type="described" ref="VSP_034498 VSP_034499"/>
    </isoform>
</comment>
<comment type="tissue specificity">
    <text evidence="2">Highly expressed in lung and myeloid leukemia cell line (at protein level). Isoform 4: expressed in heart (at protein level).</text>
</comment>
<proteinExistence type="evidence at protein level"/>
<organism>
    <name type="scientific">Mus musculus</name>
    <name type="common">Mouse</name>
    <dbReference type="NCBI Taxonomy" id="10090"/>
    <lineage>
        <taxon>Eukaryota</taxon>
        <taxon>Metazoa</taxon>
        <taxon>Chordata</taxon>
        <taxon>Craniata</taxon>
        <taxon>Vertebrata</taxon>
        <taxon>Euteleostomi</taxon>
        <taxon>Mammalia</taxon>
        <taxon>Eutheria</taxon>
        <taxon>Euarchontoglires</taxon>
        <taxon>Glires</taxon>
        <taxon>Rodentia</taxon>
        <taxon>Myomorpha</taxon>
        <taxon>Muroidea</taxon>
        <taxon>Muridae</taxon>
        <taxon>Murinae</taxon>
        <taxon>Mus</taxon>
        <taxon>Mus</taxon>
    </lineage>
</organism>
<protein>
    <recommendedName>
        <fullName evidence="7">Tetratricopeptide repeat protein 41</fullName>
        <shortName evidence="6">TPR repeat protein 41</shortName>
    </recommendedName>
    <alternativeName>
        <fullName evidence="4">Grp94-neighboring nucleotidase</fullName>
    </alternativeName>
</protein>
<accession>Q692V3</accession>
<accession>Q3TLE1</accession>
<accession>Q692V4</accession>
<accession>Q692V5</accession>
<accession>Q8K0V5</accession>
<keyword id="KW-0025">Alternative splicing</keyword>
<keyword id="KW-0963">Cytoplasm</keyword>
<keyword id="KW-1185">Reference proteome</keyword>
<keyword id="KW-0677">Repeat</keyword>
<keyword id="KW-0802">TPR repeat</keyword>